<sequence length="419" mass="42697">MMSMNSKQPHFAMHPTLPEHKYPSLHSSSEAIRRACLPTPPLQSNLFASLDETLLARAEALAAVDIAVSQGKSHPFKPDATYHTMNSVPCTSTSTVPLAHHHHHHHHHQALEPGDLLDHISSPSLALMAGAGGAGAAAGGGGAHDGPGGGGGPGGGGGPGGGPGGGGGGGPGGGGGGPGGGLLGGSAHPHPHMHSLGHLSHPAAAAAMNMPSGLPHPGLVAAAAHHGAAAAAAAAAAGQVAAASAAAAVVGAAGLASICDSDTDPRELEAFAERFKQRRIKLGVTQADVGSALANLKIPGVGSLSQSTICRFESLTLSHNNMIALKPILQAWLEEAEGAQREKMNKPELFNGGEKKRKRTSIAAPEKRSLEAYFAVQPRPSSEKIAAIAEKLDLKKNVVRVWFCNQRQKQKRMKFSATY</sequence>
<organism>
    <name type="scientific">Homo sapiens</name>
    <name type="common">Human</name>
    <dbReference type="NCBI Taxonomy" id="9606"/>
    <lineage>
        <taxon>Eukaryota</taxon>
        <taxon>Metazoa</taxon>
        <taxon>Chordata</taxon>
        <taxon>Craniata</taxon>
        <taxon>Vertebrata</taxon>
        <taxon>Euteleostomi</taxon>
        <taxon>Mammalia</taxon>
        <taxon>Eutheria</taxon>
        <taxon>Euarchontoglires</taxon>
        <taxon>Primates</taxon>
        <taxon>Haplorrhini</taxon>
        <taxon>Catarrhini</taxon>
        <taxon>Hominidae</taxon>
        <taxon>Homo</taxon>
    </lineage>
</organism>
<keyword id="KW-0025">Alternative splicing</keyword>
<keyword id="KW-0963">Cytoplasm</keyword>
<keyword id="KW-0217">Developmental protein</keyword>
<keyword id="KW-0225">Disease variant</keyword>
<keyword id="KW-0238">DNA-binding</keyword>
<keyword id="KW-0371">Homeobox</keyword>
<keyword id="KW-0991">Intellectual disability</keyword>
<keyword id="KW-0539">Nucleus</keyword>
<keyword id="KW-1267">Proteomics identification</keyword>
<keyword id="KW-1185">Reference proteome</keyword>
<keyword id="KW-0804">Transcription</keyword>
<keyword id="KW-0805">Transcription regulation</keyword>
<comment type="function">
    <text evidence="1">Multifunctional transcription factor with different regions mediating its different effects. Acts by binding (via its C-terminal domain) to sequences related to the consensus octamer motif 5'-ATGCAAAT-3' in the regulatory regions of its target genes. Regulates the expression of specific genes involved in differentiation and survival within a subset of neuronal lineages. It has been shown that activation of some of these genes requires its N-terminal domain, maybe through a neuronal-specific cofactor. Activates BCL2 expression and protects neuronal cells from apoptosis (via the N-terminal domain). Induces neuronal process outgrowth and the coordinate expression of genes encoding synaptic proteins. Exerts its major developmental effects in somatosensory neurons and in brainstem nuclei involved in motor control. Stimulates the binding affinity of the nuclear estrogene receptor ESR1 to DNA estrogen response element (ERE), and hence modulates ESR1-induced transcriptional activity. May positively regulate POU4F2 and POU4F3. Regulates dorsal root ganglion sensory neuron specification and axonal projection into the spinal cord. Plays a role in TNFSF11-mediated terminal osteoclast differentiation. Negatively regulates its own expression interacting directly with a highly conserved autoregulatory domain surrounding the transcription initiation site.</text>
</comment>
<comment type="function">
    <molecule>Isoform 2</molecule>
    <text evidence="1">Able to act as transcription factor, cannot regulate the expression of the same subset of genes than isoform 1. Does not have antiapoptotic effect on neuronal cells.</text>
</comment>
<comment type="subunit">
    <text evidence="1">Interacts (via N-terminus) with RIT2; the interaction controls POU4F1 transactivation activity on some neuronal target genes. Isoform 1 interacts with POU4F2; this interaction inhibits both POU4F1 DNA-binding and transcriptional activities. Isoform 1 interacts (C-terminus) with ESR1 (via DNA-binding domain); this interaction decreases the estrogen receptor ESR1 transcriptional activity in a DNA- and ligand 17-beta-estradiol-independent manner.</text>
</comment>
<comment type="interaction">
    <interactant intactId="EBI-17480471">
        <id>Q01851</id>
    </interactant>
    <interactant intactId="EBI-726739">
        <id>Q9UPY8</id>
        <label>MAPRE3</label>
    </interactant>
    <organismsDiffer>false</organismsDiffer>
    <experiments>3</experiments>
</comment>
<comment type="subcellular location">
    <subcellularLocation>
        <location evidence="5">Nucleus</location>
    </subcellularLocation>
    <subcellularLocation>
        <location evidence="1">Cytoplasm</location>
    </subcellularLocation>
</comment>
<comment type="alternative products">
    <event type="alternative splicing"/>
    <isoform>
        <id>Q01851-1</id>
        <name>1</name>
        <name evidence="10">Brn-3A-Long</name>
        <sequence type="displayed"/>
    </isoform>
    <isoform>
        <id>Q01851-2</id>
        <name>2</name>
        <name evidence="10">Brn-3A-Short</name>
        <sequence type="described" ref="VSP_058636"/>
    </isoform>
</comment>
<comment type="tissue specificity">
    <text evidence="6 8">Expressed in the brain and the retina. Present in the developing brain, spinal cord and eye.</text>
</comment>
<comment type="developmental stage">
    <text evidence="6">Expression peaks early in embryogenesis (day 13.5) and is undetectable 14 days after birth.</text>
</comment>
<comment type="domain">
    <text evidence="1">The C-terminal domain is able to act as both DNA-binding domain and a transcriptional activator. The N-terminal domain is also required for transactivation activity on some target genes acting as a discrete activation domain. Neurite outgrowth and expression of genes required for synapse formation are primarily dependent on the C-terminal domain, however the N-terminal domain is required for maximal induction.</text>
</comment>
<comment type="disease" evidence="7">
    <disease id="DI-06132">
        <name>Ataxia, intention tremor, and hypotonia syndrome, childhood-onset</name>
        <acronym>ATITHS</acronym>
        <description>An autosomal dominant neurodevelopmental disorder characterized by global developmental delay, mildly impaired intellectual development with speech delay or learning disabilities, delayed walking due to ataxia, intention tremor, and hypotonia apparent from early childhood. Brain imaging shows cerebellar atrophy in some patients.</description>
        <dbReference type="MIM" id="619352"/>
    </disease>
    <text>The disease is caused by variants affecting the gene represented in this entry.</text>
</comment>
<comment type="similarity">
    <text evidence="10">Belongs to the POU transcription factor family. Class-4 subfamily.</text>
</comment>
<comment type="sequence caution" evidence="10">
    <conflict type="frameshift">
        <sequence resource="EMBL-CDS" id="CAA45907"/>
    </conflict>
</comment>
<comment type="online information" name="Atlas of Genetics and Cytogenetics in Oncology and Haematology">
    <link uri="https://atlasgeneticsoncology.org/gene/44173/POU4F1"/>
</comment>
<protein>
    <recommendedName>
        <fullName evidence="11">POU domain, class 4, transcription factor 1</fullName>
    </recommendedName>
    <alternativeName>
        <fullName>Brain-specific homeobox/POU domain protein 3A</fullName>
        <shortName>Brain-3A</shortName>
        <shortName>Brn-3A</shortName>
    </alternativeName>
    <alternativeName>
        <fullName>Homeobox/POU domain protein RDC-1</fullName>
    </alternativeName>
    <alternativeName>
        <fullName>Oct-T1</fullName>
    </alternativeName>
</protein>
<reference key="1">
    <citation type="journal article" date="1992" name="Nucleic Acids Res.">
        <title>A novel POU homeodomain gene specifically expressed in cells of the developing mammalian nervous system.</title>
        <authorList>
            <person name="Collum R.G."/>
            <person name="Fisher P.E."/>
            <person name="Datta M."/>
            <person name="Mellis S."/>
            <person name="Thiele C."/>
            <person name="Huebner K."/>
            <person name="Croce C.M."/>
            <person name="Israel M.A."/>
            <person name="Theil T."/>
            <person name="Moroy T."/>
            <person name="DePinho R.A."/>
            <person name="Alt F.W."/>
        </authorList>
    </citation>
    <scope>NUCLEOTIDE SEQUENCE [MRNA] (ISOFORM 2)</scope>
    <scope>DEVELOPMENTAL STAGE</scope>
    <source>
        <tissue>Placenta</tissue>
    </source>
</reference>
<reference key="2">
    <citation type="journal article" date="1993" name="Proc. Natl. Acad. Sci. U.S.A.">
        <title>Differential expression of four members of the POU family of proteins in activated and phorbol 12-myristate 13-acetate-treated Jurkat T cells.</title>
        <authorList>
            <person name="Bhargava A.K."/>
            <person name="Li Z."/>
            <person name="Weissman S.M."/>
        </authorList>
    </citation>
    <scope>NUCLEOTIDE SEQUENCE [MRNA]</scope>
</reference>
<reference key="3">
    <citation type="journal article" date="1995" name="J. Neurosci.">
        <title>The Brn-3 family of POU-domain factors: primary structure, binding specificity, and expression in subsets of retinal ganglion cells and somatosensory neurons.</title>
        <authorList>
            <person name="Xiang M."/>
            <person name="Zhou L.-J."/>
            <person name="Macke J.P."/>
            <person name="Yoshioka T."/>
            <person name="Hendry S.H."/>
            <person name="Eddy R.L."/>
            <person name="Shows T.B."/>
            <person name="Nathans J."/>
        </authorList>
    </citation>
    <scope>NUCLEOTIDE SEQUENCE [GENOMIC DNA]</scope>
    <scope>TISSUE SPECIFICITY</scope>
    <source>
        <tissue>Retina</tissue>
    </source>
</reference>
<reference key="4">
    <citation type="journal article" date="2004" name="Nature">
        <title>The DNA sequence and analysis of human chromosome 13.</title>
        <authorList>
            <person name="Dunham A."/>
            <person name="Matthews L.H."/>
            <person name="Burton J."/>
            <person name="Ashurst J.L."/>
            <person name="Howe K.L."/>
            <person name="Ashcroft K.J."/>
            <person name="Beare D.M."/>
            <person name="Burford D.C."/>
            <person name="Hunt S.E."/>
            <person name="Griffiths-Jones S."/>
            <person name="Jones M.C."/>
            <person name="Keenan S.J."/>
            <person name="Oliver K."/>
            <person name="Scott C.E."/>
            <person name="Ainscough R."/>
            <person name="Almeida J.P."/>
            <person name="Ambrose K.D."/>
            <person name="Andrews D.T."/>
            <person name="Ashwell R.I.S."/>
            <person name="Babbage A.K."/>
            <person name="Bagguley C.L."/>
            <person name="Bailey J."/>
            <person name="Bannerjee R."/>
            <person name="Barlow K.F."/>
            <person name="Bates K."/>
            <person name="Beasley H."/>
            <person name="Bird C.P."/>
            <person name="Bray-Allen S."/>
            <person name="Brown A.J."/>
            <person name="Brown J.Y."/>
            <person name="Burrill W."/>
            <person name="Carder C."/>
            <person name="Carter N.P."/>
            <person name="Chapman J.C."/>
            <person name="Clamp M.E."/>
            <person name="Clark S.Y."/>
            <person name="Clarke G."/>
            <person name="Clee C.M."/>
            <person name="Clegg S.C."/>
            <person name="Cobley V."/>
            <person name="Collins J.E."/>
            <person name="Corby N."/>
            <person name="Coville G.J."/>
            <person name="Deloukas P."/>
            <person name="Dhami P."/>
            <person name="Dunham I."/>
            <person name="Dunn M."/>
            <person name="Earthrowl M.E."/>
            <person name="Ellington A.G."/>
            <person name="Faulkner L."/>
            <person name="Frankish A.G."/>
            <person name="Frankland J."/>
            <person name="French L."/>
            <person name="Garner P."/>
            <person name="Garnett J."/>
            <person name="Gilbert J.G.R."/>
            <person name="Gilson C.J."/>
            <person name="Ghori J."/>
            <person name="Grafham D.V."/>
            <person name="Gribble S.M."/>
            <person name="Griffiths C."/>
            <person name="Hall R.E."/>
            <person name="Hammond S."/>
            <person name="Harley J.L."/>
            <person name="Hart E.A."/>
            <person name="Heath P.D."/>
            <person name="Howden P.J."/>
            <person name="Huckle E.J."/>
            <person name="Hunt P.J."/>
            <person name="Hunt A.R."/>
            <person name="Johnson C."/>
            <person name="Johnson D."/>
            <person name="Kay M."/>
            <person name="Kimberley A.M."/>
            <person name="King A."/>
            <person name="Laird G.K."/>
            <person name="Langford C.J."/>
            <person name="Lawlor S."/>
            <person name="Leongamornlert D.A."/>
            <person name="Lloyd D.M."/>
            <person name="Lloyd C."/>
            <person name="Loveland J.E."/>
            <person name="Lovell J."/>
            <person name="Martin S."/>
            <person name="Mashreghi-Mohammadi M."/>
            <person name="McLaren S.J."/>
            <person name="McMurray A."/>
            <person name="Milne S."/>
            <person name="Moore M.J.F."/>
            <person name="Nickerson T."/>
            <person name="Palmer S.A."/>
            <person name="Pearce A.V."/>
            <person name="Peck A.I."/>
            <person name="Pelan S."/>
            <person name="Phillimore B."/>
            <person name="Porter K.M."/>
            <person name="Rice C.M."/>
            <person name="Searle S."/>
            <person name="Sehra H.K."/>
            <person name="Shownkeen R."/>
            <person name="Skuce C.D."/>
            <person name="Smith M."/>
            <person name="Steward C.A."/>
            <person name="Sycamore N."/>
            <person name="Tester J."/>
            <person name="Thomas D.W."/>
            <person name="Tracey A."/>
            <person name="Tromans A."/>
            <person name="Tubby B."/>
            <person name="Wall M."/>
            <person name="Wallis J.M."/>
            <person name="West A.P."/>
            <person name="Whitehead S.L."/>
            <person name="Willey D.L."/>
            <person name="Wilming L."/>
            <person name="Wray P.W."/>
            <person name="Wright M.W."/>
            <person name="Young L."/>
            <person name="Coulson A."/>
            <person name="Durbin R.M."/>
            <person name="Hubbard T."/>
            <person name="Sulston J.E."/>
            <person name="Beck S."/>
            <person name="Bentley D.R."/>
            <person name="Rogers J."/>
            <person name="Ross M.T."/>
        </authorList>
    </citation>
    <scope>NUCLEOTIDE SEQUENCE [LARGE SCALE GENOMIC DNA]</scope>
    <scope>VARIANT GLY-163 DEL</scope>
</reference>
<reference key="5">
    <citation type="submission" date="2005-07" db="EMBL/GenBank/DDBJ databases">
        <authorList>
            <person name="Mural R.J."/>
            <person name="Istrail S."/>
            <person name="Sutton G.G."/>
            <person name="Florea L."/>
            <person name="Halpern A.L."/>
            <person name="Mobarry C.M."/>
            <person name="Lippert R."/>
            <person name="Walenz B."/>
            <person name="Shatkay H."/>
            <person name="Dew I."/>
            <person name="Miller J.R."/>
            <person name="Flanigan M.J."/>
            <person name="Edwards N.J."/>
            <person name="Bolanos R."/>
            <person name="Fasulo D."/>
            <person name="Halldorsson B.V."/>
            <person name="Hannenhalli S."/>
            <person name="Turner R."/>
            <person name="Yooseph S."/>
            <person name="Lu F."/>
            <person name="Nusskern D.R."/>
            <person name="Shue B.C."/>
            <person name="Zheng X.H."/>
            <person name="Zhong F."/>
            <person name="Delcher A.L."/>
            <person name="Huson D.H."/>
            <person name="Kravitz S.A."/>
            <person name="Mouchard L."/>
            <person name="Reinert K."/>
            <person name="Remington K.A."/>
            <person name="Clark A.G."/>
            <person name="Waterman M.S."/>
            <person name="Eichler E.E."/>
            <person name="Adams M.D."/>
            <person name="Hunkapiller M.W."/>
            <person name="Myers E.W."/>
            <person name="Venter J.C."/>
        </authorList>
    </citation>
    <scope>NUCLEOTIDE SEQUENCE [LARGE SCALE GENOMIC DNA]</scope>
    <scope>VARIANT GLY-163 DEL</scope>
</reference>
<reference key="6">
    <citation type="journal article" date="2003" name="Oncogene">
        <title>Functional interaction between the small GTP-binding protein Rin and the N-terminal of Brn-3a transcription factor.</title>
        <authorList>
            <person name="Calissano M."/>
            <person name="Latchman D.S."/>
        </authorList>
    </citation>
    <scope>SUBCELLULAR LOCATION</scope>
</reference>
<reference key="7">
    <citation type="journal article" date="2021" name="Hum. Mutat.">
        <title>Haploinsufficiency of POU4F1 causes an ataxia syndrome with hypotonia and intention tremor.</title>
        <authorList>
            <person name="Webb B.D."/>
            <person name="Evans A."/>
            <person name="Naidich T.P."/>
            <person name="Bird L.M."/>
            <person name="Parikh S."/>
            <person name="Fernandez Garcia M."/>
            <person name="Henderson L.B."/>
            <person name="Millan F."/>
            <person name="Si Y."/>
            <person name="Brennand K.J."/>
            <person name="Hung P."/>
            <person name="Rucker J.C."/>
            <person name="Wheeler P.G."/>
            <person name="Schadt E.E."/>
        </authorList>
    </citation>
    <scope>INVOLVEMENT IN ATITHS</scope>
    <scope>VARIANT ATITHS ARG-306</scope>
    <scope>CHARACTERIZATION OF VARIANT ATITHS ARG-306</scope>
</reference>
<gene>
    <name evidence="11" type="primary">POU4F1</name>
    <name type="synonym">BRN3A</name>
    <name evidence="9" type="synonym">RDC1</name>
</gene>
<feature type="chain" id="PRO_0000100736" description="POU domain, class 4, transcription factor 1">
    <location>
        <begin position="1"/>
        <end position="419"/>
    </location>
</feature>
<feature type="domain" description="POU-specific" evidence="3">
    <location>
        <begin position="261"/>
        <end position="338"/>
    </location>
</feature>
<feature type="DNA-binding region" description="Homeobox" evidence="2">
    <location>
        <begin position="356"/>
        <end position="415"/>
    </location>
</feature>
<feature type="region of interest" description="Disordered" evidence="4">
    <location>
        <begin position="94"/>
        <end position="117"/>
    </location>
</feature>
<feature type="region of interest" description="Disordered" evidence="4">
    <location>
        <begin position="131"/>
        <end position="197"/>
    </location>
</feature>
<feature type="short sequence motif" description="POU-IV box">
    <location>
        <begin position="57"/>
        <end position="66"/>
    </location>
</feature>
<feature type="compositionally biased region" description="Basic residues" evidence="4">
    <location>
        <begin position="99"/>
        <end position="108"/>
    </location>
</feature>
<feature type="compositionally biased region" description="Gly residues" evidence="4">
    <location>
        <begin position="131"/>
        <end position="184"/>
    </location>
</feature>
<feature type="splice variant" id="VSP_058636" description="In isoform 2." evidence="10">
    <location>
        <begin position="1"/>
        <end position="84"/>
    </location>
</feature>
<feature type="sequence variant" id="VAR_046449">
    <location>
        <position position="163"/>
    </location>
</feature>
<feature type="sequence variant" id="VAR_085801" description="In ATITHS; decreased transcriptional activity shown in a luciferase assay; dbSNP:rs1874704791." evidence="7">
    <original>Q</original>
    <variation>R</variation>
    <location>
        <position position="306"/>
    </location>
</feature>
<feature type="sequence conflict" description="In Ref. 1; CAA45907." evidence="10" ref="1">
    <original>TS</original>
    <variation>H</variation>
    <location>
        <begin position="91"/>
        <end position="92"/>
    </location>
</feature>
<feature type="sequence conflict" description="In Ref. 3; AAA57161." evidence="10" ref="3">
    <original>A</original>
    <variation>R</variation>
    <location>
        <position position="99"/>
    </location>
</feature>
<feature type="sequence conflict" description="In Ref. 3; AAA57161." evidence="10" ref="3">
    <original>A</original>
    <variation>AGAG</variation>
    <location>
        <position position="129"/>
    </location>
</feature>
<feature type="sequence conflict" description="In Ref. 1; CAA45907." evidence="10" ref="1">
    <original>GP</original>
    <variation>AA</variation>
    <location>
        <begin position="146"/>
        <end position="147"/>
    </location>
</feature>
<feature type="sequence conflict" description="In Ref. 1; CAA45907." evidence="10" ref="1">
    <original>GP</original>
    <variation>PR</variation>
    <location>
        <begin position="152"/>
        <end position="153"/>
    </location>
</feature>
<feature type="sequence conflict" description="In Ref. 2; AAA65605, 3; AAA57161 and 1; CAA45907." evidence="10" ref="2 3 1">
    <original>P</original>
    <variation>PG</variation>
    <location>
        <position position="159"/>
    </location>
</feature>
<feature type="sequence conflict" description="In Ref. 1; CAA45907." evidence="10" ref="1">
    <original>GP</original>
    <variation>AA</variation>
    <location>
        <begin position="170"/>
        <end position="171"/>
    </location>
</feature>
<feature type="sequence conflict" description="In Ref. 1; CAA45907." evidence="10" ref="1">
    <original>G</original>
    <variation>A</variation>
    <location>
        <position position="185"/>
    </location>
</feature>
<feature type="sequence conflict" description="In Ref. 2; AAA65605." evidence="10" ref="2">
    <original>A</original>
    <variation>S</variation>
    <location>
        <position position="236"/>
    </location>
</feature>
<feature type="sequence conflict" description="In Ref. 1; CAA45907." evidence="10" ref="1">
    <location>
        <position position="245"/>
    </location>
</feature>
<feature type="sequence conflict" description="In Ref. 1; CAA45907." evidence="10" ref="1">
    <original>A</original>
    <variation>R</variation>
    <location>
        <position position="252"/>
    </location>
</feature>
<feature type="sequence conflict" description="In Ref. 1; CAA45907." evidence="10" ref="1">
    <original>AER</original>
    <variation>GS</variation>
    <location>
        <begin position="272"/>
        <end position="274"/>
    </location>
</feature>
<name>PO4F1_HUMAN</name>
<proteinExistence type="evidence at protein level"/>
<evidence type="ECO:0000250" key="1">
    <source>
        <dbReference type="UniProtKB" id="P17208"/>
    </source>
</evidence>
<evidence type="ECO:0000255" key="2">
    <source>
        <dbReference type="PROSITE-ProRule" id="PRU00108"/>
    </source>
</evidence>
<evidence type="ECO:0000255" key="3">
    <source>
        <dbReference type="PROSITE-ProRule" id="PRU00530"/>
    </source>
</evidence>
<evidence type="ECO:0000256" key="4">
    <source>
        <dbReference type="SAM" id="MobiDB-lite"/>
    </source>
</evidence>
<evidence type="ECO:0000269" key="5">
    <source>
    </source>
</evidence>
<evidence type="ECO:0000269" key="6">
    <source>
    </source>
</evidence>
<evidence type="ECO:0000269" key="7">
    <source>
    </source>
</evidence>
<evidence type="ECO:0000269" key="8">
    <source>
    </source>
</evidence>
<evidence type="ECO:0000303" key="9">
    <source>
    </source>
</evidence>
<evidence type="ECO:0000305" key="10"/>
<evidence type="ECO:0000312" key="11">
    <source>
        <dbReference type="HGNC" id="HGNC:9218"/>
    </source>
</evidence>
<dbReference type="EMBL" id="L20433">
    <property type="protein sequence ID" value="AAA65605.1"/>
    <property type="molecule type" value="mRNA"/>
</dbReference>
<dbReference type="EMBL" id="U10063">
    <property type="protein sequence ID" value="AAA57161.1"/>
    <property type="molecule type" value="Genomic_DNA"/>
</dbReference>
<dbReference type="EMBL" id="U10062">
    <property type="protein sequence ID" value="AAA57161.1"/>
    <property type="status" value="JOINED"/>
    <property type="molecule type" value="Genomic_DNA"/>
</dbReference>
<dbReference type="EMBL" id="AL445209">
    <property type="status" value="NOT_ANNOTATED_CDS"/>
    <property type="molecule type" value="Genomic_DNA"/>
</dbReference>
<dbReference type="EMBL" id="CH471093">
    <property type="protein sequence ID" value="EAW80585.1"/>
    <property type="molecule type" value="Genomic_DNA"/>
</dbReference>
<dbReference type="EMBL" id="X64624">
    <property type="protein sequence ID" value="CAA45907.1"/>
    <property type="status" value="ALT_FRAME"/>
    <property type="molecule type" value="mRNA"/>
</dbReference>
<dbReference type="CCDS" id="CCDS31996.1">
    <molecule id="Q01851-1"/>
</dbReference>
<dbReference type="PIR" id="I59234">
    <property type="entry name" value="I59234"/>
</dbReference>
<dbReference type="PIR" id="S78452">
    <property type="entry name" value="S78452"/>
</dbReference>
<dbReference type="RefSeq" id="NP_006228.3">
    <molecule id="Q01851-1"/>
    <property type="nucleotide sequence ID" value="NM_006237.3"/>
</dbReference>
<dbReference type="SMR" id="Q01851"/>
<dbReference type="BioGRID" id="111453">
    <property type="interactions" value="7"/>
</dbReference>
<dbReference type="FunCoup" id="Q01851">
    <property type="interactions" value="2307"/>
</dbReference>
<dbReference type="IntAct" id="Q01851">
    <property type="interactions" value="4"/>
</dbReference>
<dbReference type="MINT" id="Q01851"/>
<dbReference type="STRING" id="9606.ENSP00000366413"/>
<dbReference type="GlyGen" id="Q01851">
    <property type="glycosylation" value="1 site"/>
</dbReference>
<dbReference type="iPTMnet" id="Q01851"/>
<dbReference type="PhosphoSitePlus" id="Q01851"/>
<dbReference type="BioMuta" id="POU4F1"/>
<dbReference type="DMDM" id="334302933"/>
<dbReference type="jPOST" id="Q01851"/>
<dbReference type="MassIVE" id="Q01851"/>
<dbReference type="PaxDb" id="9606-ENSP00000366413"/>
<dbReference type="PeptideAtlas" id="Q01851"/>
<dbReference type="ProteomicsDB" id="58010"/>
<dbReference type="Antibodypedia" id="24689">
    <property type="antibodies" value="153 antibodies from 31 providers"/>
</dbReference>
<dbReference type="DNASU" id="5457"/>
<dbReference type="Ensembl" id="ENST00000377208.7">
    <molecule id="Q01851-1"/>
    <property type="protein sequence ID" value="ENSP00000366413.4"/>
    <property type="gene ID" value="ENSG00000152192.8"/>
</dbReference>
<dbReference type="GeneID" id="5457"/>
<dbReference type="KEGG" id="hsa:5457"/>
<dbReference type="MANE-Select" id="ENST00000377208.7">
    <property type="protein sequence ID" value="ENSP00000366413.4"/>
    <property type="RefSeq nucleotide sequence ID" value="NM_006237.4"/>
    <property type="RefSeq protein sequence ID" value="NP_006228.3"/>
</dbReference>
<dbReference type="UCSC" id="uc001vkv.4">
    <molecule id="Q01851-1"/>
    <property type="organism name" value="human"/>
</dbReference>
<dbReference type="AGR" id="HGNC:9218"/>
<dbReference type="CTD" id="5457"/>
<dbReference type="DisGeNET" id="5457"/>
<dbReference type="GeneCards" id="POU4F1"/>
<dbReference type="HGNC" id="HGNC:9218">
    <property type="gene designation" value="POU4F1"/>
</dbReference>
<dbReference type="HPA" id="ENSG00000152192">
    <property type="expression patterns" value="Tissue enhanced (retina)"/>
</dbReference>
<dbReference type="MalaCards" id="POU4F1"/>
<dbReference type="MIM" id="601632">
    <property type="type" value="gene"/>
</dbReference>
<dbReference type="MIM" id="619352">
    <property type="type" value="phenotype"/>
</dbReference>
<dbReference type="neXtProt" id="NX_Q01851"/>
<dbReference type="OpenTargets" id="ENSG00000152192"/>
<dbReference type="Orphanet" id="314647">
    <property type="disease" value="Non-progressive cerebellar ataxia with intellectual disability"/>
</dbReference>
<dbReference type="PharmGKB" id="PA33542"/>
<dbReference type="VEuPathDB" id="HostDB:ENSG00000152192"/>
<dbReference type="eggNOG" id="KOG1168">
    <property type="taxonomic scope" value="Eukaryota"/>
</dbReference>
<dbReference type="GeneTree" id="ENSGT00940000162154"/>
<dbReference type="HOGENOM" id="CLU_013065_0_0_1"/>
<dbReference type="InParanoid" id="Q01851"/>
<dbReference type="OMA" id="AHSHMHG"/>
<dbReference type="OrthoDB" id="6358449at2759"/>
<dbReference type="PAN-GO" id="Q01851">
    <property type="GO annotations" value="3 GO annotations based on evolutionary models"/>
</dbReference>
<dbReference type="PhylomeDB" id="Q01851"/>
<dbReference type="TreeFam" id="TF316413"/>
<dbReference type="PathwayCommons" id="Q01851"/>
<dbReference type="Reactome" id="R-HSA-6804759">
    <property type="pathway name" value="Regulation of TP53 Activity through Association with Co-factors"/>
</dbReference>
<dbReference type="SignaLink" id="Q01851"/>
<dbReference type="SIGNOR" id="Q01851"/>
<dbReference type="BioGRID-ORCS" id="5457">
    <property type="hits" value="10 hits in 1181 CRISPR screens"/>
</dbReference>
<dbReference type="GeneWiki" id="POU4F1"/>
<dbReference type="GenomeRNAi" id="5457"/>
<dbReference type="Pharos" id="Q01851">
    <property type="development level" value="Tbio"/>
</dbReference>
<dbReference type="PRO" id="PR:Q01851"/>
<dbReference type="Proteomes" id="UP000005640">
    <property type="component" value="Chromosome 13"/>
</dbReference>
<dbReference type="RNAct" id="Q01851">
    <property type="molecule type" value="protein"/>
</dbReference>
<dbReference type="Bgee" id="ENSG00000152192">
    <property type="expression patterns" value="Expressed in secondary oocyte and 39 other cell types or tissues"/>
</dbReference>
<dbReference type="GO" id="GO:0000785">
    <property type="term" value="C:chromatin"/>
    <property type="evidence" value="ECO:0000247"/>
    <property type="project" value="NTNU_SB"/>
</dbReference>
<dbReference type="GO" id="GO:0005737">
    <property type="term" value="C:cytoplasm"/>
    <property type="evidence" value="ECO:0000250"/>
    <property type="project" value="UniProtKB"/>
</dbReference>
<dbReference type="GO" id="GO:0043005">
    <property type="term" value="C:neuron projection"/>
    <property type="evidence" value="ECO:0007669"/>
    <property type="project" value="Ensembl"/>
</dbReference>
<dbReference type="GO" id="GO:0005654">
    <property type="term" value="C:nucleoplasm"/>
    <property type="evidence" value="ECO:0000304"/>
    <property type="project" value="Reactome"/>
</dbReference>
<dbReference type="GO" id="GO:0005634">
    <property type="term" value="C:nucleus"/>
    <property type="evidence" value="ECO:0000250"/>
    <property type="project" value="UniProtKB"/>
</dbReference>
<dbReference type="GO" id="GO:0090575">
    <property type="term" value="C:RNA polymerase II transcription regulator complex"/>
    <property type="evidence" value="ECO:0007669"/>
    <property type="project" value="Ensembl"/>
</dbReference>
<dbReference type="GO" id="GO:0003682">
    <property type="term" value="F:chromatin binding"/>
    <property type="evidence" value="ECO:0007669"/>
    <property type="project" value="Ensembl"/>
</dbReference>
<dbReference type="GO" id="GO:0001228">
    <property type="term" value="F:DNA-binding transcription activator activity, RNA polymerase II-specific"/>
    <property type="evidence" value="ECO:0000250"/>
    <property type="project" value="GO_Central"/>
</dbReference>
<dbReference type="GO" id="GO:0000981">
    <property type="term" value="F:DNA-binding transcription factor activity, RNA polymerase II-specific"/>
    <property type="evidence" value="ECO:0000314"/>
    <property type="project" value="ParkinsonsUK-UCL"/>
</dbReference>
<dbReference type="GO" id="GO:0001227">
    <property type="term" value="F:DNA-binding transcription repressor activity, RNA polymerase II-specific"/>
    <property type="evidence" value="ECO:0000250"/>
    <property type="project" value="ARUK-UCL"/>
</dbReference>
<dbReference type="GO" id="GO:0051020">
    <property type="term" value="F:GTPase binding"/>
    <property type="evidence" value="ECO:0007669"/>
    <property type="project" value="Ensembl"/>
</dbReference>
<dbReference type="GO" id="GO:0000978">
    <property type="term" value="F:RNA polymerase II cis-regulatory region sequence-specific DNA binding"/>
    <property type="evidence" value="ECO:0000250"/>
    <property type="project" value="BHF-UCL"/>
</dbReference>
<dbReference type="GO" id="GO:0061629">
    <property type="term" value="F:RNA polymerase II-specific DNA-binding transcription factor binding"/>
    <property type="evidence" value="ECO:0007669"/>
    <property type="project" value="Ensembl"/>
</dbReference>
<dbReference type="GO" id="GO:0043565">
    <property type="term" value="F:sequence-specific DNA binding"/>
    <property type="evidence" value="ECO:0000250"/>
    <property type="project" value="UniProtKB"/>
</dbReference>
<dbReference type="GO" id="GO:1990837">
    <property type="term" value="F:sequence-specific double-stranded DNA binding"/>
    <property type="evidence" value="ECO:0000314"/>
    <property type="project" value="ARUK-UCL"/>
</dbReference>
<dbReference type="GO" id="GO:0003697">
    <property type="term" value="F:single-stranded DNA binding"/>
    <property type="evidence" value="ECO:0000250"/>
    <property type="project" value="UniProtKB"/>
</dbReference>
<dbReference type="GO" id="GO:0007409">
    <property type="term" value="P:axonogenesis"/>
    <property type="evidence" value="ECO:0000304"/>
    <property type="project" value="BHF-UCL"/>
</dbReference>
<dbReference type="GO" id="GO:0021535">
    <property type="term" value="P:cell migration in hindbrain"/>
    <property type="evidence" value="ECO:0007669"/>
    <property type="project" value="Ensembl"/>
</dbReference>
<dbReference type="GO" id="GO:0071345">
    <property type="term" value="P:cellular response to cytokine stimulus"/>
    <property type="evidence" value="ECO:0000250"/>
    <property type="project" value="UniProtKB"/>
</dbReference>
<dbReference type="GO" id="GO:0071392">
    <property type="term" value="P:cellular response to estradiol stimulus"/>
    <property type="evidence" value="ECO:0000250"/>
    <property type="project" value="UniProtKB"/>
</dbReference>
<dbReference type="GO" id="GO:0021953">
    <property type="term" value="P:central nervous system neuron differentiation"/>
    <property type="evidence" value="ECO:0007669"/>
    <property type="project" value="Ensembl"/>
</dbReference>
<dbReference type="GO" id="GO:0021986">
    <property type="term" value="P:habenula development"/>
    <property type="evidence" value="ECO:0007669"/>
    <property type="project" value="Ensembl"/>
</dbReference>
<dbReference type="GO" id="GO:0007507">
    <property type="term" value="P:heart development"/>
    <property type="evidence" value="ECO:0000250"/>
    <property type="project" value="ARUK-UCL"/>
</dbReference>
<dbReference type="GO" id="GO:0060384">
    <property type="term" value="P:innervation"/>
    <property type="evidence" value="ECO:0000304"/>
    <property type="project" value="BHF-UCL"/>
</dbReference>
<dbReference type="GO" id="GO:0072332">
    <property type="term" value="P:intrinsic apoptotic signaling pathway by p53 class mediator"/>
    <property type="evidence" value="ECO:0000250"/>
    <property type="project" value="UniProtKB"/>
</dbReference>
<dbReference type="GO" id="GO:0007498">
    <property type="term" value="P:mesoderm development"/>
    <property type="evidence" value="ECO:0007669"/>
    <property type="project" value="Ensembl"/>
</dbReference>
<dbReference type="GO" id="GO:0043066">
    <property type="term" value="P:negative regulation of apoptotic process"/>
    <property type="evidence" value="ECO:0000250"/>
    <property type="project" value="ARUK-UCL"/>
</dbReference>
<dbReference type="GO" id="GO:0010629">
    <property type="term" value="P:negative regulation of gene expression"/>
    <property type="evidence" value="ECO:0000250"/>
    <property type="project" value="ARUK-UCL"/>
</dbReference>
<dbReference type="GO" id="GO:0043524">
    <property type="term" value="P:negative regulation of neuron apoptotic process"/>
    <property type="evidence" value="ECO:0000250"/>
    <property type="project" value="UniProtKB"/>
</dbReference>
<dbReference type="GO" id="GO:0043069">
    <property type="term" value="P:negative regulation of programmed cell death"/>
    <property type="evidence" value="ECO:0000250"/>
    <property type="project" value="UniProtKB"/>
</dbReference>
<dbReference type="GO" id="GO:0000122">
    <property type="term" value="P:negative regulation of transcription by RNA polymerase II"/>
    <property type="evidence" value="ECO:0000250"/>
    <property type="project" value="BHF-UCL"/>
</dbReference>
<dbReference type="GO" id="GO:0051402">
    <property type="term" value="P:neuron apoptotic process"/>
    <property type="evidence" value="ECO:0007669"/>
    <property type="project" value="Ensembl"/>
</dbReference>
<dbReference type="GO" id="GO:0048665">
    <property type="term" value="P:neuron fate specification"/>
    <property type="evidence" value="ECO:0000250"/>
    <property type="project" value="BHF-UCL"/>
</dbReference>
<dbReference type="GO" id="GO:0001764">
    <property type="term" value="P:neuron migration"/>
    <property type="evidence" value="ECO:0007669"/>
    <property type="project" value="Ensembl"/>
</dbReference>
<dbReference type="GO" id="GO:0031175">
    <property type="term" value="P:neuron projection development"/>
    <property type="evidence" value="ECO:0000250"/>
    <property type="project" value="UniProtKB"/>
</dbReference>
<dbReference type="GO" id="GO:0048935">
    <property type="term" value="P:peripheral nervous system neuron development"/>
    <property type="evidence" value="ECO:0000250"/>
    <property type="project" value="BHF-UCL"/>
</dbReference>
<dbReference type="GO" id="GO:0010628">
    <property type="term" value="P:positive regulation of gene expression"/>
    <property type="evidence" value="ECO:0000250"/>
    <property type="project" value="UniProtKB"/>
</dbReference>
<dbReference type="GO" id="GO:0043525">
    <property type="term" value="P:positive regulation of neuron apoptotic process"/>
    <property type="evidence" value="ECO:0007669"/>
    <property type="project" value="Ensembl"/>
</dbReference>
<dbReference type="GO" id="GO:0045672">
    <property type="term" value="P:positive regulation of osteoclast differentiation"/>
    <property type="evidence" value="ECO:0000250"/>
    <property type="project" value="UniProtKB"/>
</dbReference>
<dbReference type="GO" id="GO:0045944">
    <property type="term" value="P:positive regulation of transcription by RNA polymerase II"/>
    <property type="evidence" value="ECO:0000314"/>
    <property type="project" value="ParkinsonsUK-UCL"/>
</dbReference>
<dbReference type="GO" id="GO:2000679">
    <property type="term" value="P:positive regulation of transcription regulatory region DNA binding"/>
    <property type="evidence" value="ECO:0000250"/>
    <property type="project" value="UniProtKB"/>
</dbReference>
<dbReference type="GO" id="GO:0051355">
    <property type="term" value="P:proprioception involved in equilibrioception"/>
    <property type="evidence" value="ECO:0007669"/>
    <property type="project" value="Ensembl"/>
</dbReference>
<dbReference type="GO" id="GO:0051726">
    <property type="term" value="P:regulation of cell cycle"/>
    <property type="evidence" value="ECO:0000250"/>
    <property type="project" value="UniProtKB"/>
</dbReference>
<dbReference type="GO" id="GO:0051090">
    <property type="term" value="P:regulation of DNA-binding transcription factor activity"/>
    <property type="evidence" value="ECO:0000250"/>
    <property type="project" value="UniProtKB"/>
</dbReference>
<dbReference type="GO" id="GO:0050767">
    <property type="term" value="P:regulation of neurogenesis"/>
    <property type="evidence" value="ECO:0007669"/>
    <property type="project" value="Ensembl"/>
</dbReference>
<dbReference type="GO" id="GO:0006357">
    <property type="term" value="P:regulation of transcription by RNA polymerase II"/>
    <property type="evidence" value="ECO:0000318"/>
    <property type="project" value="GO_Central"/>
</dbReference>
<dbReference type="GO" id="GO:0048880">
    <property type="term" value="P:sensory system development"/>
    <property type="evidence" value="ECO:0000250"/>
    <property type="project" value="BHF-UCL"/>
</dbReference>
<dbReference type="GO" id="GO:0001967">
    <property type="term" value="P:suckling behavior"/>
    <property type="evidence" value="ECO:0007669"/>
    <property type="project" value="Ensembl"/>
</dbReference>
<dbReference type="GO" id="GO:0007416">
    <property type="term" value="P:synapse assembly"/>
    <property type="evidence" value="ECO:0000304"/>
    <property type="project" value="ProtInc"/>
</dbReference>
<dbReference type="GO" id="GO:0021559">
    <property type="term" value="P:trigeminal nerve development"/>
    <property type="evidence" value="ECO:0000250"/>
    <property type="project" value="BHF-UCL"/>
</dbReference>
<dbReference type="GO" id="GO:0003223">
    <property type="term" value="P:ventricular compact myocardium morphogenesis"/>
    <property type="evidence" value="ECO:0007669"/>
    <property type="project" value="Ensembl"/>
</dbReference>
<dbReference type="CDD" id="cd00086">
    <property type="entry name" value="homeodomain"/>
    <property type="match status" value="1"/>
</dbReference>
<dbReference type="FunFam" id="1.10.10.60:FF:000056">
    <property type="entry name" value="POU domain protein"/>
    <property type="match status" value="1"/>
</dbReference>
<dbReference type="FunFam" id="1.10.260.40:FF:000007">
    <property type="entry name" value="POU domain protein"/>
    <property type="match status" value="1"/>
</dbReference>
<dbReference type="Gene3D" id="1.10.10.60">
    <property type="entry name" value="Homeodomain-like"/>
    <property type="match status" value="1"/>
</dbReference>
<dbReference type="Gene3D" id="1.10.260.40">
    <property type="entry name" value="lambda repressor-like DNA-binding domains"/>
    <property type="match status" value="1"/>
</dbReference>
<dbReference type="InterPro" id="IPR001356">
    <property type="entry name" value="HD"/>
</dbReference>
<dbReference type="InterPro" id="IPR017970">
    <property type="entry name" value="Homeobox_CS"/>
</dbReference>
<dbReference type="InterPro" id="IPR009057">
    <property type="entry name" value="Homeodomain-like_sf"/>
</dbReference>
<dbReference type="InterPro" id="IPR010982">
    <property type="entry name" value="Lambda_DNA-bd_dom_sf"/>
</dbReference>
<dbReference type="InterPro" id="IPR013847">
    <property type="entry name" value="POU"/>
</dbReference>
<dbReference type="InterPro" id="IPR000327">
    <property type="entry name" value="POU_dom"/>
</dbReference>
<dbReference type="InterPro" id="IPR050255">
    <property type="entry name" value="POU_domain_TF"/>
</dbReference>
<dbReference type="PANTHER" id="PTHR11636">
    <property type="entry name" value="POU DOMAIN"/>
    <property type="match status" value="1"/>
</dbReference>
<dbReference type="PANTHER" id="PTHR11636:SF42">
    <property type="entry name" value="POU DOMAIN, CLASS 4, TRANSCRIPTION FACTOR 1"/>
    <property type="match status" value="1"/>
</dbReference>
<dbReference type="Pfam" id="PF00046">
    <property type="entry name" value="Homeodomain"/>
    <property type="match status" value="1"/>
</dbReference>
<dbReference type="Pfam" id="PF00157">
    <property type="entry name" value="Pou"/>
    <property type="match status" value="1"/>
</dbReference>
<dbReference type="PRINTS" id="PR00028">
    <property type="entry name" value="POUDOMAIN"/>
</dbReference>
<dbReference type="SMART" id="SM00389">
    <property type="entry name" value="HOX"/>
    <property type="match status" value="1"/>
</dbReference>
<dbReference type="SMART" id="SM00352">
    <property type="entry name" value="POU"/>
    <property type="match status" value="1"/>
</dbReference>
<dbReference type="SUPFAM" id="SSF46689">
    <property type="entry name" value="Homeodomain-like"/>
    <property type="match status" value="1"/>
</dbReference>
<dbReference type="SUPFAM" id="SSF47413">
    <property type="entry name" value="lambda repressor-like DNA-binding domains"/>
    <property type="match status" value="1"/>
</dbReference>
<dbReference type="PROSITE" id="PS00027">
    <property type="entry name" value="HOMEOBOX_1"/>
    <property type="match status" value="1"/>
</dbReference>
<dbReference type="PROSITE" id="PS50071">
    <property type="entry name" value="HOMEOBOX_2"/>
    <property type="match status" value="1"/>
</dbReference>
<dbReference type="PROSITE" id="PS00035">
    <property type="entry name" value="POU_1"/>
    <property type="match status" value="1"/>
</dbReference>
<dbReference type="PROSITE" id="PS00465">
    <property type="entry name" value="POU_2"/>
    <property type="match status" value="1"/>
</dbReference>
<dbReference type="PROSITE" id="PS51179">
    <property type="entry name" value="POU_3"/>
    <property type="match status" value="1"/>
</dbReference>
<accession>Q01851</accession>
<accession>Q14986</accession>
<accession>Q15318</accession>
<accession>Q5T227</accession>